<comment type="function">
    <text evidence="1">RNaseP catalyzes the removal of the 5'-leader sequence from pre-tRNA to produce the mature 5'-terminus. It can also cleave other RNA substrates such as 4.5S RNA. The protein component plays an auxiliary but essential role in vivo by binding to the 5'-leader sequence and broadening the substrate specificity of the ribozyme.</text>
</comment>
<comment type="catalytic activity">
    <reaction evidence="1">
        <text>Endonucleolytic cleavage of RNA, removing 5'-extranucleotides from tRNA precursor.</text>
        <dbReference type="EC" id="3.1.26.5"/>
    </reaction>
</comment>
<comment type="subunit">
    <text evidence="1">Consists of a catalytic RNA component (M1 or rnpB) and a protein subunit.</text>
</comment>
<comment type="similarity">
    <text evidence="1">Belongs to the RnpA family.</text>
</comment>
<proteinExistence type="inferred from homology"/>
<accession>Q92H35</accession>
<protein>
    <recommendedName>
        <fullName evidence="1">Ribonuclease P protein component</fullName>
        <shortName evidence="1">RNase P protein</shortName>
        <shortName evidence="1">RNaseP protein</shortName>
        <ecNumber evidence="1">3.1.26.5</ecNumber>
    </recommendedName>
    <alternativeName>
        <fullName evidence="1">Protein C5</fullName>
    </alternativeName>
</protein>
<keyword id="KW-0255">Endonuclease</keyword>
<keyword id="KW-0378">Hydrolase</keyword>
<keyword id="KW-0540">Nuclease</keyword>
<keyword id="KW-0694">RNA-binding</keyword>
<keyword id="KW-0819">tRNA processing</keyword>
<name>RNPA_RICCN</name>
<reference key="1">
    <citation type="journal article" date="2001" name="Science">
        <title>Mechanisms of evolution in Rickettsia conorii and R. prowazekii.</title>
        <authorList>
            <person name="Ogata H."/>
            <person name="Audic S."/>
            <person name="Renesto-Audiffren P."/>
            <person name="Fournier P.-E."/>
            <person name="Barbe V."/>
            <person name="Samson D."/>
            <person name="Roux V."/>
            <person name="Cossart P."/>
            <person name="Weissenbach J."/>
            <person name="Claverie J.-M."/>
            <person name="Raoult D."/>
        </authorList>
    </citation>
    <scope>NUCLEOTIDE SEQUENCE [LARGE SCALE GENOMIC DNA]</scope>
    <source>
        <strain>ATCC VR-613 / Malish 7</strain>
    </source>
</reference>
<gene>
    <name evidence="1" type="primary">rnpA</name>
    <name type="ordered locus">RC0937</name>
</gene>
<sequence length="118" mass="13971">MSITSLKNQKEFELINKLGKKLHERYFILVIATKLPKIFLESKYNTFLGIKVSRKLNKKAVVRNKIKRRIRHLIRIIVSDSSFKAIKFAMIIIPRKGFEEINFSHLNYELSKVILRNI</sequence>
<evidence type="ECO:0000255" key="1">
    <source>
        <dbReference type="HAMAP-Rule" id="MF_00227"/>
    </source>
</evidence>
<dbReference type="EC" id="3.1.26.5" evidence="1"/>
<dbReference type="EMBL" id="AE006914">
    <property type="protein sequence ID" value="AAL03475.1"/>
    <property type="molecule type" value="Genomic_DNA"/>
</dbReference>
<dbReference type="PIR" id="A97817">
    <property type="entry name" value="A97817"/>
</dbReference>
<dbReference type="RefSeq" id="WP_010977534.1">
    <property type="nucleotide sequence ID" value="NC_003103.1"/>
</dbReference>
<dbReference type="SMR" id="Q92H35"/>
<dbReference type="GeneID" id="95362356"/>
<dbReference type="KEGG" id="rco:RC0937"/>
<dbReference type="HOGENOM" id="CLU_2047938_0_0_5"/>
<dbReference type="Proteomes" id="UP000000816">
    <property type="component" value="Chromosome"/>
</dbReference>
<dbReference type="GO" id="GO:0030677">
    <property type="term" value="C:ribonuclease P complex"/>
    <property type="evidence" value="ECO:0007669"/>
    <property type="project" value="TreeGrafter"/>
</dbReference>
<dbReference type="GO" id="GO:0042781">
    <property type="term" value="F:3'-tRNA processing endoribonuclease activity"/>
    <property type="evidence" value="ECO:0007669"/>
    <property type="project" value="TreeGrafter"/>
</dbReference>
<dbReference type="GO" id="GO:0004526">
    <property type="term" value="F:ribonuclease P activity"/>
    <property type="evidence" value="ECO:0007669"/>
    <property type="project" value="UniProtKB-UniRule"/>
</dbReference>
<dbReference type="GO" id="GO:0000049">
    <property type="term" value="F:tRNA binding"/>
    <property type="evidence" value="ECO:0007669"/>
    <property type="project" value="UniProtKB-UniRule"/>
</dbReference>
<dbReference type="GO" id="GO:0001682">
    <property type="term" value="P:tRNA 5'-leader removal"/>
    <property type="evidence" value="ECO:0007669"/>
    <property type="project" value="UniProtKB-UniRule"/>
</dbReference>
<dbReference type="Gene3D" id="3.30.230.10">
    <property type="match status" value="1"/>
</dbReference>
<dbReference type="HAMAP" id="MF_00227">
    <property type="entry name" value="RNase_P"/>
    <property type="match status" value="1"/>
</dbReference>
<dbReference type="InterPro" id="IPR020568">
    <property type="entry name" value="Ribosomal_Su5_D2-typ_SF"/>
</dbReference>
<dbReference type="InterPro" id="IPR014721">
    <property type="entry name" value="Ribsml_uS5_D2-typ_fold_subgr"/>
</dbReference>
<dbReference type="InterPro" id="IPR000100">
    <property type="entry name" value="RNase_P"/>
</dbReference>
<dbReference type="InterPro" id="IPR020539">
    <property type="entry name" value="RNase_P_CS"/>
</dbReference>
<dbReference type="NCBIfam" id="TIGR00188">
    <property type="entry name" value="rnpA"/>
    <property type="match status" value="1"/>
</dbReference>
<dbReference type="PANTHER" id="PTHR33992">
    <property type="entry name" value="RIBONUCLEASE P PROTEIN COMPONENT"/>
    <property type="match status" value="1"/>
</dbReference>
<dbReference type="PANTHER" id="PTHR33992:SF1">
    <property type="entry name" value="RIBONUCLEASE P PROTEIN COMPONENT"/>
    <property type="match status" value="1"/>
</dbReference>
<dbReference type="Pfam" id="PF00825">
    <property type="entry name" value="Ribonuclease_P"/>
    <property type="match status" value="1"/>
</dbReference>
<dbReference type="SUPFAM" id="SSF54211">
    <property type="entry name" value="Ribosomal protein S5 domain 2-like"/>
    <property type="match status" value="1"/>
</dbReference>
<dbReference type="PROSITE" id="PS00648">
    <property type="entry name" value="RIBONUCLEASE_P"/>
    <property type="match status" value="1"/>
</dbReference>
<feature type="chain" id="PRO_0000198517" description="Ribonuclease P protein component">
    <location>
        <begin position="1"/>
        <end position="118"/>
    </location>
</feature>
<organism>
    <name type="scientific">Rickettsia conorii (strain ATCC VR-613 / Malish 7)</name>
    <dbReference type="NCBI Taxonomy" id="272944"/>
    <lineage>
        <taxon>Bacteria</taxon>
        <taxon>Pseudomonadati</taxon>
        <taxon>Pseudomonadota</taxon>
        <taxon>Alphaproteobacteria</taxon>
        <taxon>Rickettsiales</taxon>
        <taxon>Rickettsiaceae</taxon>
        <taxon>Rickettsieae</taxon>
        <taxon>Rickettsia</taxon>
        <taxon>spotted fever group</taxon>
    </lineage>
</organism>